<comment type="function">
    <text evidence="2 3 4">Sulfotransferase that utilizes 3'-phospho-5'-adenylyl sulfate (PAPS) as sulfonate donor to catalyze the sulfate conjugation of dopamine, small phenols such as 1-naphthol and p-nitrophenol and thyroid hormones, including 3,3'-diiodothyronine, triidothyronine (T3) and reverse triiodothyronine (rT3) (PubMed:12773305, PubMed:8530477). May play a role in gut microbiota-host metabolic interaction. O-sulfonates 4-ethylphenol (4-EP), a dietary tyrosine-derived metabolite produced by gut bacteria. The product 4-EPS crosses the blood-brain barrier and may negatively regulate oligodendrocyte maturation and myelination, affecting the functional connectivity of different brain regions associated with the limbic system (By similarity).</text>
</comment>
<comment type="catalytic activity">
    <reaction evidence="3 4">
        <text>a phenol + 3'-phosphoadenylyl sulfate = an aryl sulfate + adenosine 3',5'-bisphosphate + H(+)</text>
        <dbReference type="Rhea" id="RHEA:12164"/>
        <dbReference type="ChEBI" id="CHEBI:15378"/>
        <dbReference type="ChEBI" id="CHEBI:33853"/>
        <dbReference type="ChEBI" id="CHEBI:58339"/>
        <dbReference type="ChEBI" id="CHEBI:58343"/>
        <dbReference type="ChEBI" id="CHEBI:140317"/>
        <dbReference type="EC" id="2.8.2.1"/>
    </reaction>
    <physiologicalReaction direction="left-to-right" evidence="8">
        <dbReference type="Rhea" id="RHEA:12165"/>
    </physiologicalReaction>
</comment>
<comment type="catalytic activity">
    <reaction evidence="3">
        <text>3,3',5-triiodo-L-thyronine + 3'-phosphoadenylyl sulfate = 3,3',5-triiodo-L-thyronine sulfate + adenosine 3',5'-bisphosphate + H(+)</text>
        <dbReference type="Rhea" id="RHEA:67876"/>
        <dbReference type="ChEBI" id="CHEBI:15378"/>
        <dbReference type="ChEBI" id="CHEBI:58339"/>
        <dbReference type="ChEBI" id="CHEBI:58343"/>
        <dbReference type="ChEBI" id="CHEBI:176511"/>
        <dbReference type="ChEBI" id="CHEBI:533015"/>
    </reaction>
    <physiologicalReaction direction="left-to-right" evidence="7">
        <dbReference type="Rhea" id="RHEA:67877"/>
    </physiologicalReaction>
</comment>
<comment type="catalytic activity">
    <reaction evidence="2">
        <text>3,3',5'-triiodo-L-thyronine + 3'-phosphoadenylyl sulfate = 3,3',5'-triiodo-L-thyronine sulfate + adenosine 3',5'-bisphosphate + H(+)</text>
        <dbReference type="Rhea" id="RHEA:67888"/>
        <dbReference type="ChEBI" id="CHEBI:15378"/>
        <dbReference type="ChEBI" id="CHEBI:57261"/>
        <dbReference type="ChEBI" id="CHEBI:58339"/>
        <dbReference type="ChEBI" id="CHEBI:58343"/>
        <dbReference type="ChEBI" id="CHEBI:176513"/>
    </reaction>
    <physiologicalReaction direction="left-to-right" evidence="2">
        <dbReference type="Rhea" id="RHEA:67889"/>
    </physiologicalReaction>
</comment>
<comment type="catalytic activity">
    <reaction evidence="3">
        <text>3,3'-diiodo-L-thyronine + 3'-phosphoadenylyl sulfate = 3,3'-diiodo-L-thyronine sulfate + adenosine 3',5'-bisphosphate + H(+)</text>
        <dbReference type="Rhea" id="RHEA:67892"/>
        <dbReference type="ChEBI" id="CHEBI:15378"/>
        <dbReference type="ChEBI" id="CHEBI:58339"/>
        <dbReference type="ChEBI" id="CHEBI:58343"/>
        <dbReference type="ChEBI" id="CHEBI:176514"/>
        <dbReference type="ChEBI" id="CHEBI:176515"/>
    </reaction>
    <physiologicalReaction direction="left-to-right" evidence="7">
        <dbReference type="Rhea" id="RHEA:67893"/>
    </physiologicalReaction>
</comment>
<comment type="catalytic activity">
    <reaction evidence="2">
        <text>dopamine + 3'-phosphoadenylyl sulfate = dopamine 3-O-sulfate + adenosine 3',5'-bisphosphate + H(+)</text>
        <dbReference type="Rhea" id="RHEA:67880"/>
        <dbReference type="ChEBI" id="CHEBI:15378"/>
        <dbReference type="ChEBI" id="CHEBI:58339"/>
        <dbReference type="ChEBI" id="CHEBI:58343"/>
        <dbReference type="ChEBI" id="CHEBI:59905"/>
        <dbReference type="ChEBI" id="CHEBI:133524"/>
    </reaction>
    <physiologicalReaction direction="left-to-right" evidence="2">
        <dbReference type="Rhea" id="RHEA:67881"/>
    </physiologicalReaction>
</comment>
<comment type="catalytic activity">
    <reaction evidence="2">
        <text>dopamine + 3'-phosphoadenylyl sulfate = dopamine 4-O-sulfate + adenosine 3',5'-bisphosphate + H(+)</text>
        <dbReference type="Rhea" id="RHEA:67884"/>
        <dbReference type="ChEBI" id="CHEBI:15378"/>
        <dbReference type="ChEBI" id="CHEBI:58339"/>
        <dbReference type="ChEBI" id="CHEBI:58343"/>
        <dbReference type="ChEBI" id="CHEBI:59905"/>
        <dbReference type="ChEBI" id="CHEBI:133529"/>
    </reaction>
    <physiologicalReaction direction="left-to-right" evidence="2">
        <dbReference type="Rhea" id="RHEA:67885"/>
    </physiologicalReaction>
</comment>
<comment type="catalytic activity">
    <reaction evidence="2">
        <text>4-ethylphenol + 3'-phosphoadenylyl sulfate = 4-ethylphenyl sulfate + adenosine 3',5'-bisphosphate + H(+)</text>
        <dbReference type="Rhea" id="RHEA:70607"/>
        <dbReference type="ChEBI" id="CHEBI:15378"/>
        <dbReference type="ChEBI" id="CHEBI:49584"/>
        <dbReference type="ChEBI" id="CHEBI:58339"/>
        <dbReference type="ChEBI" id="CHEBI:58343"/>
        <dbReference type="ChEBI" id="CHEBI:133681"/>
    </reaction>
    <physiologicalReaction direction="left-to-right" evidence="2">
        <dbReference type="Rhea" id="RHEA:70608"/>
    </physiologicalReaction>
</comment>
<comment type="biophysicochemical properties">
    <kinetics>
        <KM evidence="3">0.62 uM for 3,3'-diiodo-L-thyronine</KM>
        <KM evidence="3">100 uM for 3,3',5-triiodo-L-thyronine</KM>
        <KM evidence="4">3.44 mM for D-dopamine</KM>
        <KM evidence="4">30.9 mM for p-nitrophenol</KM>
        <KM evidence="4">0.76 mM for L-dopamine</KM>
        <Vmax evidence="4">125000.0 pmol/min/mg enzyme with p-nitrophenol as substrate</Vmax>
        <Vmax evidence="4">3521.0 pmol/min/mg enzyme with L-dopamine as substrate</Vmax>
        <Vmax evidence="4">13699.0 pmol/min/mg enzyme with D-dopamine as substrate</Vmax>
        <Vmax evidence="3">251.0 pmol/min/mg enzyme with 3,3'-diiodo-L-thyronine</Vmax>
        <Vmax evidence="3">50.0 pmol/min/mg enzyme with 3,3',5-triiodo-L-thyronine as substrate</Vmax>
    </kinetics>
</comment>
<comment type="subcellular location">
    <subcellularLocation>
        <location evidence="4">Cytoplasm</location>
    </subcellularLocation>
</comment>
<comment type="PTM">
    <text>The N-terminus is blocked.</text>
</comment>
<comment type="similarity">
    <text evidence="6">Belongs to the sulfotransferase 1 family.</text>
</comment>
<dbReference type="EC" id="2.8.2.1" evidence="3 4"/>
<dbReference type="EMBL" id="U38419">
    <property type="protein sequence ID" value="AAC52387.1"/>
    <property type="molecule type" value="mRNA"/>
</dbReference>
<dbReference type="EMBL" id="D89375">
    <property type="protein sequence ID" value="BAA24546.1"/>
    <property type="molecule type" value="mRNA"/>
</dbReference>
<dbReference type="PIR" id="JC5884">
    <property type="entry name" value="JC5884"/>
</dbReference>
<dbReference type="RefSeq" id="NP_071958.1">
    <property type="nucleotide sequence ID" value="NM_022513.2"/>
</dbReference>
<dbReference type="SMR" id="P52847"/>
<dbReference type="FunCoup" id="P52847">
    <property type="interactions" value="100"/>
</dbReference>
<dbReference type="IntAct" id="P52847">
    <property type="interactions" value="1"/>
</dbReference>
<dbReference type="STRING" id="10116.ENSRNOP00000002699"/>
<dbReference type="iPTMnet" id="P52847"/>
<dbReference type="PhosphoSitePlus" id="P52847"/>
<dbReference type="PaxDb" id="10116-ENSRNOP00000002699"/>
<dbReference type="Ensembl" id="ENSRNOT00000002699.6">
    <property type="protein sequence ID" value="ENSRNOP00000002699.2"/>
    <property type="gene ID" value="ENSRNOG00000001967.6"/>
</dbReference>
<dbReference type="GeneID" id="64305"/>
<dbReference type="KEGG" id="rno:64305"/>
<dbReference type="UCSC" id="RGD:708534">
    <property type="organism name" value="rat"/>
</dbReference>
<dbReference type="AGR" id="RGD:708534"/>
<dbReference type="CTD" id="27284"/>
<dbReference type="RGD" id="708534">
    <property type="gene designation" value="Sult1b1"/>
</dbReference>
<dbReference type="eggNOG" id="KOG1584">
    <property type="taxonomic scope" value="Eukaryota"/>
</dbReference>
<dbReference type="GeneTree" id="ENSGT00940000161848"/>
<dbReference type="HOGENOM" id="CLU_027239_1_2_1"/>
<dbReference type="InParanoid" id="P52847"/>
<dbReference type="OMA" id="IIYLCRE"/>
<dbReference type="OrthoDB" id="205623at2759"/>
<dbReference type="PhylomeDB" id="P52847"/>
<dbReference type="TreeFam" id="TF321745"/>
<dbReference type="BRENDA" id="2.8.2.1">
    <property type="organism ID" value="5301"/>
</dbReference>
<dbReference type="Reactome" id="R-RNO-156584">
    <property type="pathway name" value="Cytosolic sulfonation of small molecules"/>
</dbReference>
<dbReference type="PRO" id="PR:P52847"/>
<dbReference type="Proteomes" id="UP000002494">
    <property type="component" value="Chromosome 14"/>
</dbReference>
<dbReference type="Bgee" id="ENSRNOG00000001967">
    <property type="expression patterns" value="Expressed in liver and 15 other cell types or tissues"/>
</dbReference>
<dbReference type="GO" id="GO:0005737">
    <property type="term" value="C:cytoplasm"/>
    <property type="evidence" value="ECO:0000318"/>
    <property type="project" value="GO_Central"/>
</dbReference>
<dbReference type="GO" id="GO:0004062">
    <property type="term" value="F:aryl sulfotransferase activity"/>
    <property type="evidence" value="ECO:0000314"/>
    <property type="project" value="UniProtKB"/>
</dbReference>
<dbReference type="GO" id="GO:0008146">
    <property type="term" value="F:sulfotransferase activity"/>
    <property type="evidence" value="ECO:0000266"/>
    <property type="project" value="RGD"/>
</dbReference>
<dbReference type="GO" id="GO:0050427">
    <property type="term" value="P:3'-phosphoadenosine 5'-phosphosulfate metabolic process"/>
    <property type="evidence" value="ECO:0000266"/>
    <property type="project" value="RGD"/>
</dbReference>
<dbReference type="GO" id="GO:0030855">
    <property type="term" value="P:epithelial cell differentiation"/>
    <property type="evidence" value="ECO:0000266"/>
    <property type="project" value="RGD"/>
</dbReference>
<dbReference type="GO" id="GO:0006068">
    <property type="term" value="P:ethanol catabolic process"/>
    <property type="evidence" value="ECO:0000266"/>
    <property type="project" value="RGD"/>
</dbReference>
<dbReference type="GO" id="GO:0009812">
    <property type="term" value="P:flavonoid metabolic process"/>
    <property type="evidence" value="ECO:0000266"/>
    <property type="project" value="RGD"/>
</dbReference>
<dbReference type="GO" id="GO:0018958">
    <property type="term" value="P:phenol-containing compound metabolic process"/>
    <property type="evidence" value="ECO:0000266"/>
    <property type="project" value="RGD"/>
</dbReference>
<dbReference type="GO" id="GO:0051923">
    <property type="term" value="P:sulfation"/>
    <property type="evidence" value="ECO:0000314"/>
    <property type="project" value="UniProtKB"/>
</dbReference>
<dbReference type="GO" id="GO:0042403">
    <property type="term" value="P:thyroid hormone metabolic process"/>
    <property type="evidence" value="ECO:0000314"/>
    <property type="project" value="UniProtKB"/>
</dbReference>
<dbReference type="GO" id="GO:0006805">
    <property type="term" value="P:xenobiotic metabolic process"/>
    <property type="evidence" value="ECO:0000266"/>
    <property type="project" value="RGD"/>
</dbReference>
<dbReference type="FunFam" id="3.40.50.300:FF:000433">
    <property type="entry name" value="Estrogen sulfotransferase"/>
    <property type="match status" value="1"/>
</dbReference>
<dbReference type="Gene3D" id="3.40.50.300">
    <property type="entry name" value="P-loop containing nucleotide triphosphate hydrolases"/>
    <property type="match status" value="1"/>
</dbReference>
<dbReference type="InterPro" id="IPR027417">
    <property type="entry name" value="P-loop_NTPase"/>
</dbReference>
<dbReference type="InterPro" id="IPR000863">
    <property type="entry name" value="Sulfotransferase_dom"/>
</dbReference>
<dbReference type="PANTHER" id="PTHR11783">
    <property type="entry name" value="SULFOTRANSFERASE SULT"/>
    <property type="match status" value="1"/>
</dbReference>
<dbReference type="Pfam" id="PF00685">
    <property type="entry name" value="Sulfotransfer_1"/>
    <property type="match status" value="1"/>
</dbReference>
<dbReference type="SUPFAM" id="SSF52540">
    <property type="entry name" value="P-loop containing nucleoside triphosphate hydrolases"/>
    <property type="match status" value="1"/>
</dbReference>
<proteinExistence type="evidence at protein level"/>
<sequence length="299" mass="34835">MGTAEDVFRKDLKIIHGYPMVYAFALGWEKIEEFQSRPCDIVIPTYPKSGTTWLSEIVDMVLNDGNVEKCKRDVITSKVPMLEQNVPGARRSGVELLKKTPSPRIIKTHLPIDLLPKSFWDNKCKMIYLARNGKDVAVSYYHFDLMNNIQPLPGTWEEYLEKFLAGNVAYGSWFDHVKSWWEKREGHPILFLYYEDLKKNPKKEIKKIANFLDKTLDEHTLERIVHHTSFEVMKDNPLVNYTHLPTEIMDHSKSPFMRKGVVGDWKNYFTMTQSEKFDAIYKKKLSGTTLEFCTDIQSA</sequence>
<name>ST1B1_RAT</name>
<feature type="chain" id="PRO_0000085163" description="Sulfotransferase 1B1">
    <location>
        <begin position="1"/>
        <end position="299"/>
    </location>
</feature>
<feature type="active site" description="Proton acceptor" evidence="1">
    <location>
        <position position="109"/>
    </location>
</feature>
<feature type="binding site" evidence="2">
    <location>
        <begin position="48"/>
        <end position="53"/>
    </location>
    <ligand>
        <name>3'-phosphoadenylyl sulfate</name>
        <dbReference type="ChEBI" id="CHEBI:58339"/>
    </ligand>
</feature>
<feature type="binding site" evidence="1">
    <location>
        <begin position="107"/>
        <end position="109"/>
    </location>
    <ligand>
        <name>substrate</name>
    </ligand>
</feature>
<feature type="binding site" evidence="2">
    <location>
        <position position="131"/>
    </location>
    <ligand>
        <name>3'-phosphoadenylyl sulfate</name>
        <dbReference type="ChEBI" id="CHEBI:58339"/>
    </ligand>
</feature>
<feature type="binding site" evidence="2">
    <location>
        <position position="139"/>
    </location>
    <ligand>
        <name>3'-phosphoadenylyl sulfate</name>
        <dbReference type="ChEBI" id="CHEBI:58339"/>
    </ligand>
</feature>
<feature type="binding site" evidence="2">
    <location>
        <position position="194"/>
    </location>
    <ligand>
        <name>3'-phosphoadenylyl sulfate</name>
        <dbReference type="ChEBI" id="CHEBI:58339"/>
    </ligand>
</feature>
<feature type="binding site" evidence="2">
    <location>
        <begin position="228"/>
        <end position="233"/>
    </location>
    <ligand>
        <name>3'-phosphoadenylyl sulfate</name>
        <dbReference type="ChEBI" id="CHEBI:58339"/>
    </ligand>
</feature>
<feature type="binding site" evidence="2">
    <location>
        <begin position="258"/>
        <end position="260"/>
    </location>
    <ligand>
        <name>3'-phosphoadenylyl sulfate</name>
        <dbReference type="ChEBI" id="CHEBI:58339"/>
    </ligand>
</feature>
<feature type="sequence conflict" description="In Ref. 1; AAC52387." evidence="6" ref="1">
    <original>E</original>
    <variation>G</variation>
    <location>
        <position position="68"/>
    </location>
</feature>
<gene>
    <name evidence="9" type="primary">Sult1b1</name>
    <name type="synonym">St1b1</name>
</gene>
<evidence type="ECO:0000250" key="1"/>
<evidence type="ECO:0000250" key="2">
    <source>
        <dbReference type="UniProtKB" id="O43704"/>
    </source>
</evidence>
<evidence type="ECO:0000269" key="3">
    <source>
    </source>
</evidence>
<evidence type="ECO:0000269" key="4">
    <source>
    </source>
</evidence>
<evidence type="ECO:0000303" key="5">
    <source>
    </source>
</evidence>
<evidence type="ECO:0000305" key="6"/>
<evidence type="ECO:0000305" key="7">
    <source>
    </source>
</evidence>
<evidence type="ECO:0000305" key="8">
    <source>
    </source>
</evidence>
<evidence type="ECO:0000312" key="9">
    <source>
        <dbReference type="RGD" id="708534"/>
    </source>
</evidence>
<keyword id="KW-0963">Cytoplasm</keyword>
<keyword id="KW-0903">Direct protein sequencing</keyword>
<keyword id="KW-1185">Reference proteome</keyword>
<keyword id="KW-0808">Transferase</keyword>
<reference key="1">
    <citation type="journal article" date="1995" name="J. Biol. Chem.">
        <title>Purification, characterization, and molecular cloning of a novel rat liver Dopa/tyrosine sulfotransferase.</title>
        <authorList>
            <person name="Sakakibara Y."/>
            <person name="Takami Y."/>
            <person name="Zwieb C."/>
            <person name="Nakayama T."/>
            <person name="Suiko M."/>
            <person name="Nakajima H."/>
            <person name="Liu M.-C."/>
        </authorList>
    </citation>
    <scope>NUCLEOTIDE SEQUENCE [MRNA]</scope>
    <scope>PROTEIN SEQUENCE OF 108-117; 126-134 AND 260-266</scope>
    <scope>FUNCTION</scope>
    <scope>CATALYTIC ACTIVITY</scope>
    <scope>BIOPHYSICOCHEMICAL PROPERTIES</scope>
    <scope>SUBCELLULAR LOCATION</scope>
    <source>
        <strain>Sprague-Dawley</strain>
        <tissue>Liver</tissue>
    </source>
</reference>
<reference key="2">
    <citation type="journal article" date="1994" name="Chem. Biol. Interact.">
        <title>Structural similarity and diversity of sulfotransferases.</title>
        <authorList>
            <person name="Yamazoe Y."/>
            <person name="Nagata K."/>
            <person name="Ozawa S."/>
            <person name="Kato R."/>
        </authorList>
    </citation>
    <scope>NUCLEOTIDE SEQUENCE [MRNA]</scope>
</reference>
<reference key="3">
    <citation type="journal article" date="1997" name="J. Biochem.">
        <title>Molecular cloning and characterization of rat ST1B1 and human ST1B2 cDNAs, encoding thyroid hormone sulfotransferases.</title>
        <authorList>
            <person name="Fujita K."/>
            <person name="Nagata K."/>
            <person name="Ozawa S."/>
            <person name="Sasano H."/>
            <person name="Yamazoe Y."/>
        </authorList>
    </citation>
    <scope>NUCLEOTIDE SEQUENCE [MRNA]</scope>
    <source>
        <tissue>Liver</tissue>
    </source>
</reference>
<reference key="4">
    <citation type="journal article" date="2003" name="Am. J. Physiol.">
        <title>Characterization of rat iodothyronine sulfotransferases.</title>
        <authorList>
            <person name="Kester M.H."/>
            <person name="Kaptein E."/>
            <person name="Roest T.J."/>
            <person name="van Dijk C.H."/>
            <person name="Tibboel D."/>
            <person name="Meinl W."/>
            <person name="Glatt H."/>
            <person name="Coughtrie M.W."/>
            <person name="Visser T.J."/>
        </authorList>
    </citation>
    <scope>CATALYTIC ACTIVITY</scope>
    <scope>FUNCTION</scope>
    <scope>BIOPHYSICOCHEMICAL PROPERTIES</scope>
</reference>
<protein>
    <recommendedName>
        <fullName>Sulfotransferase 1B1</fullName>
        <shortName>ST1B1</shortName>
        <ecNumber evidence="3 4">2.8.2.1</ecNumber>
    </recommendedName>
    <alternativeName>
        <fullName evidence="5">DOPA/tyrosine sulfotransferase</fullName>
    </alternativeName>
    <alternativeName>
        <fullName>Sulfotransferase family cytosolic 1B member 1</fullName>
    </alternativeName>
</protein>
<accession>P52847</accession>
<organism>
    <name type="scientific">Rattus norvegicus</name>
    <name type="common">Rat</name>
    <dbReference type="NCBI Taxonomy" id="10116"/>
    <lineage>
        <taxon>Eukaryota</taxon>
        <taxon>Metazoa</taxon>
        <taxon>Chordata</taxon>
        <taxon>Craniata</taxon>
        <taxon>Vertebrata</taxon>
        <taxon>Euteleostomi</taxon>
        <taxon>Mammalia</taxon>
        <taxon>Eutheria</taxon>
        <taxon>Euarchontoglires</taxon>
        <taxon>Glires</taxon>
        <taxon>Rodentia</taxon>
        <taxon>Myomorpha</taxon>
        <taxon>Muroidea</taxon>
        <taxon>Muridae</taxon>
        <taxon>Murinae</taxon>
        <taxon>Rattus</taxon>
    </lineage>
</organism>